<sequence length="316" mass="34556">MSGRSPKAPRAPSSTRAGGLVVAAHGRHYLVAPDDGGAMLQCFPRGKRSEVAVGDHVIYELASADQGVIVEIGERRNLLYRSDQYKSKLFAANLDQLLIVLATEPHFSEDLLGRALVAAEANGLKPLIVLNKTDVTDELEGARKRLEPYRALGYTVVEVSIRTQPEAARAALIERLHGHSTLLLGQSGMGKSTLVNLLIPDAEVATREISTALNSGRHTTTFTRLYPLPDSADGTGGSLIDSPGFQEFGLHHLTEGRLERAFPEFRPLLPNCRFYNCHHLHEPGCAILEAVADGRIRRERHALYAQLVHEASQIVR</sequence>
<protein>
    <recommendedName>
        <fullName evidence="1">Small ribosomal subunit biogenesis GTPase RsgA</fullName>
        <ecNumber evidence="1">3.6.1.-</ecNumber>
    </recommendedName>
</protein>
<evidence type="ECO:0000255" key="1">
    <source>
        <dbReference type="HAMAP-Rule" id="MF_01820"/>
    </source>
</evidence>
<evidence type="ECO:0000255" key="2">
    <source>
        <dbReference type="PROSITE-ProRule" id="PRU01058"/>
    </source>
</evidence>
<reference key="1">
    <citation type="journal article" date="2006" name="Proc. Natl. Acad. Sci. U.S.A.">
        <title>Burkholderia xenovorans LB400 harbors a multi-replicon, 9.73-Mbp genome shaped for versatility.</title>
        <authorList>
            <person name="Chain P.S.G."/>
            <person name="Denef V.J."/>
            <person name="Konstantinidis K.T."/>
            <person name="Vergez L.M."/>
            <person name="Agullo L."/>
            <person name="Reyes V.L."/>
            <person name="Hauser L."/>
            <person name="Cordova M."/>
            <person name="Gomez L."/>
            <person name="Gonzalez M."/>
            <person name="Land M."/>
            <person name="Lao V."/>
            <person name="Larimer F."/>
            <person name="LiPuma J.J."/>
            <person name="Mahenthiralingam E."/>
            <person name="Malfatti S.A."/>
            <person name="Marx C.J."/>
            <person name="Parnell J.J."/>
            <person name="Ramette A."/>
            <person name="Richardson P."/>
            <person name="Seeger M."/>
            <person name="Smith D."/>
            <person name="Spilker T."/>
            <person name="Sul W.J."/>
            <person name="Tsoi T.V."/>
            <person name="Ulrich L.E."/>
            <person name="Zhulin I.B."/>
            <person name="Tiedje J.M."/>
        </authorList>
    </citation>
    <scope>NUCLEOTIDE SEQUENCE [LARGE SCALE GENOMIC DNA]</scope>
    <source>
        <strain>LB400</strain>
    </source>
</reference>
<organism>
    <name type="scientific">Paraburkholderia xenovorans (strain LB400)</name>
    <dbReference type="NCBI Taxonomy" id="266265"/>
    <lineage>
        <taxon>Bacteria</taxon>
        <taxon>Pseudomonadati</taxon>
        <taxon>Pseudomonadota</taxon>
        <taxon>Betaproteobacteria</taxon>
        <taxon>Burkholderiales</taxon>
        <taxon>Burkholderiaceae</taxon>
        <taxon>Paraburkholderia</taxon>
    </lineage>
</organism>
<dbReference type="EC" id="3.6.1.-" evidence="1"/>
<dbReference type="EMBL" id="CP000270">
    <property type="protein sequence ID" value="ABE31933.1"/>
    <property type="molecule type" value="Genomic_DNA"/>
</dbReference>
<dbReference type="RefSeq" id="WP_011489451.1">
    <property type="nucleotide sequence ID" value="NC_007951.1"/>
</dbReference>
<dbReference type="SMR" id="Q13VF6"/>
<dbReference type="STRING" id="266265.Bxe_A1014"/>
<dbReference type="KEGG" id="bxb:DR64_3176"/>
<dbReference type="KEGG" id="bxe:Bxe_A1014"/>
<dbReference type="PATRIC" id="fig|266265.5.peg.3566"/>
<dbReference type="eggNOG" id="COG1162">
    <property type="taxonomic scope" value="Bacteria"/>
</dbReference>
<dbReference type="OrthoDB" id="9809485at2"/>
<dbReference type="Proteomes" id="UP000001817">
    <property type="component" value="Chromosome 1"/>
</dbReference>
<dbReference type="GO" id="GO:0005737">
    <property type="term" value="C:cytoplasm"/>
    <property type="evidence" value="ECO:0007669"/>
    <property type="project" value="UniProtKB-SubCell"/>
</dbReference>
<dbReference type="GO" id="GO:0005525">
    <property type="term" value="F:GTP binding"/>
    <property type="evidence" value="ECO:0007669"/>
    <property type="project" value="UniProtKB-UniRule"/>
</dbReference>
<dbReference type="GO" id="GO:0003924">
    <property type="term" value="F:GTPase activity"/>
    <property type="evidence" value="ECO:0007669"/>
    <property type="project" value="UniProtKB-UniRule"/>
</dbReference>
<dbReference type="GO" id="GO:0046872">
    <property type="term" value="F:metal ion binding"/>
    <property type="evidence" value="ECO:0007669"/>
    <property type="project" value="UniProtKB-KW"/>
</dbReference>
<dbReference type="GO" id="GO:0019843">
    <property type="term" value="F:rRNA binding"/>
    <property type="evidence" value="ECO:0007669"/>
    <property type="project" value="UniProtKB-KW"/>
</dbReference>
<dbReference type="GO" id="GO:0042274">
    <property type="term" value="P:ribosomal small subunit biogenesis"/>
    <property type="evidence" value="ECO:0007669"/>
    <property type="project" value="UniProtKB-UniRule"/>
</dbReference>
<dbReference type="CDD" id="cd04466">
    <property type="entry name" value="S1_YloQ_GTPase"/>
    <property type="match status" value="1"/>
</dbReference>
<dbReference type="CDD" id="cd01854">
    <property type="entry name" value="YjeQ_EngC"/>
    <property type="match status" value="1"/>
</dbReference>
<dbReference type="Gene3D" id="2.40.50.140">
    <property type="entry name" value="Nucleic acid-binding proteins"/>
    <property type="match status" value="1"/>
</dbReference>
<dbReference type="Gene3D" id="3.40.50.300">
    <property type="entry name" value="P-loop containing nucleotide triphosphate hydrolases"/>
    <property type="match status" value="1"/>
</dbReference>
<dbReference type="Gene3D" id="1.10.40.50">
    <property type="entry name" value="Probable gtpase engc, domain 3"/>
    <property type="match status" value="1"/>
</dbReference>
<dbReference type="HAMAP" id="MF_01820">
    <property type="entry name" value="GTPase_RsgA"/>
    <property type="match status" value="1"/>
</dbReference>
<dbReference type="InterPro" id="IPR030378">
    <property type="entry name" value="G_CP_dom"/>
</dbReference>
<dbReference type="InterPro" id="IPR012340">
    <property type="entry name" value="NA-bd_OB-fold"/>
</dbReference>
<dbReference type="InterPro" id="IPR027417">
    <property type="entry name" value="P-loop_NTPase"/>
</dbReference>
<dbReference type="InterPro" id="IPR004881">
    <property type="entry name" value="Ribosome_biogen_GTPase_RsgA"/>
</dbReference>
<dbReference type="InterPro" id="IPR010914">
    <property type="entry name" value="RsgA_GTPase_dom"/>
</dbReference>
<dbReference type="InterPro" id="IPR031944">
    <property type="entry name" value="RsgA_N"/>
</dbReference>
<dbReference type="NCBIfam" id="TIGR00157">
    <property type="entry name" value="ribosome small subunit-dependent GTPase A"/>
    <property type="match status" value="1"/>
</dbReference>
<dbReference type="PANTHER" id="PTHR32120">
    <property type="entry name" value="SMALL RIBOSOMAL SUBUNIT BIOGENESIS GTPASE RSGA"/>
    <property type="match status" value="1"/>
</dbReference>
<dbReference type="PANTHER" id="PTHR32120:SF11">
    <property type="entry name" value="SMALL RIBOSOMAL SUBUNIT BIOGENESIS GTPASE RSGA 1, MITOCHONDRIAL-RELATED"/>
    <property type="match status" value="1"/>
</dbReference>
<dbReference type="Pfam" id="PF03193">
    <property type="entry name" value="RsgA_GTPase"/>
    <property type="match status" value="1"/>
</dbReference>
<dbReference type="SUPFAM" id="SSF50249">
    <property type="entry name" value="Nucleic acid-binding proteins"/>
    <property type="match status" value="1"/>
</dbReference>
<dbReference type="SUPFAM" id="SSF52540">
    <property type="entry name" value="P-loop containing nucleoside triphosphate hydrolases"/>
    <property type="match status" value="1"/>
</dbReference>
<dbReference type="PROSITE" id="PS50936">
    <property type="entry name" value="ENGC_GTPASE"/>
    <property type="match status" value="1"/>
</dbReference>
<dbReference type="PROSITE" id="PS51721">
    <property type="entry name" value="G_CP"/>
    <property type="match status" value="1"/>
</dbReference>
<keyword id="KW-0963">Cytoplasm</keyword>
<keyword id="KW-0342">GTP-binding</keyword>
<keyword id="KW-0378">Hydrolase</keyword>
<keyword id="KW-0479">Metal-binding</keyword>
<keyword id="KW-0547">Nucleotide-binding</keyword>
<keyword id="KW-1185">Reference proteome</keyword>
<keyword id="KW-0690">Ribosome biogenesis</keyword>
<keyword id="KW-0694">RNA-binding</keyword>
<keyword id="KW-0699">rRNA-binding</keyword>
<keyword id="KW-0862">Zinc</keyword>
<gene>
    <name evidence="1" type="primary">rsgA</name>
    <name type="ordered locus">Bxeno_A3395</name>
    <name type="ORF">Bxe_A1014</name>
</gene>
<accession>Q13VF6</accession>
<feature type="chain" id="PRO_1000216037" description="Small ribosomal subunit biogenesis GTPase RsgA">
    <location>
        <begin position="1"/>
        <end position="316"/>
    </location>
</feature>
<feature type="domain" description="CP-type G" evidence="2">
    <location>
        <begin position="83"/>
        <end position="248"/>
    </location>
</feature>
<feature type="binding site" evidence="1">
    <location>
        <begin position="131"/>
        <end position="134"/>
    </location>
    <ligand>
        <name>GTP</name>
        <dbReference type="ChEBI" id="CHEBI:37565"/>
    </ligand>
</feature>
<feature type="binding site" evidence="1">
    <location>
        <begin position="185"/>
        <end position="193"/>
    </location>
    <ligand>
        <name>GTP</name>
        <dbReference type="ChEBI" id="CHEBI:37565"/>
    </ligand>
</feature>
<feature type="binding site" evidence="1">
    <location>
        <position position="272"/>
    </location>
    <ligand>
        <name>Zn(2+)</name>
        <dbReference type="ChEBI" id="CHEBI:29105"/>
    </ligand>
</feature>
<feature type="binding site" evidence="1">
    <location>
        <position position="277"/>
    </location>
    <ligand>
        <name>Zn(2+)</name>
        <dbReference type="ChEBI" id="CHEBI:29105"/>
    </ligand>
</feature>
<feature type="binding site" evidence="1">
    <location>
        <position position="279"/>
    </location>
    <ligand>
        <name>Zn(2+)</name>
        <dbReference type="ChEBI" id="CHEBI:29105"/>
    </ligand>
</feature>
<feature type="binding site" evidence="1">
    <location>
        <position position="285"/>
    </location>
    <ligand>
        <name>Zn(2+)</name>
        <dbReference type="ChEBI" id="CHEBI:29105"/>
    </ligand>
</feature>
<name>RSGA_PARXL</name>
<proteinExistence type="inferred from homology"/>
<comment type="function">
    <text evidence="1">One of several proteins that assist in the late maturation steps of the functional core of the 30S ribosomal subunit. Helps release RbfA from mature subunits. May play a role in the assembly of ribosomal proteins into the subunit. Circularly permuted GTPase that catalyzes slow GTP hydrolysis, GTPase activity is stimulated by the 30S ribosomal subunit.</text>
</comment>
<comment type="cofactor">
    <cofactor evidence="1">
        <name>Zn(2+)</name>
        <dbReference type="ChEBI" id="CHEBI:29105"/>
    </cofactor>
    <text evidence="1">Binds 1 zinc ion per subunit.</text>
</comment>
<comment type="subunit">
    <text evidence="1">Monomer. Associates with 30S ribosomal subunit, binds 16S rRNA.</text>
</comment>
<comment type="subcellular location">
    <subcellularLocation>
        <location evidence="1">Cytoplasm</location>
    </subcellularLocation>
</comment>
<comment type="similarity">
    <text evidence="1">Belongs to the TRAFAC class YlqF/YawG GTPase family. RsgA subfamily.</text>
</comment>